<gene>
    <name type="primary">CBP</name>
</gene>
<evidence type="ECO:0000269" key="1">
    <source>
    </source>
</evidence>
<evidence type="ECO:0000269" key="2">
    <source ref="2"/>
</evidence>
<evidence type="ECO:0000303" key="3">
    <source>
    </source>
</evidence>
<evidence type="ECO:0000305" key="4"/>
<evidence type="ECO:0000312" key="5">
    <source>
        <dbReference type="EMBL" id="CAA61951.1"/>
    </source>
</evidence>
<comment type="function">
    <text evidence="3">May be a subunit of a vacuolar malate and citrate transporter.</text>
</comment>
<comment type="subcellular location">
    <subcellularLocation>
        <location evidence="1">Vacuole</location>
    </subcellularLocation>
    <text>Lutoid (vacuole), tonoplast.</text>
</comment>
<accession>Q39962</accession>
<name>CBPR_HEVBR</name>
<sequence length="238" mass="27183">MKMKRSPYCFCCSFALLLLVSFLKDRHFCSADPTDGFTEVPLTEDNFVIQKPYDKPLNDRYSYKNGIRRLWVYENDKPFKVGSPTRPRTEIRIKGHDYSSGVWQFEGQVHVPEGTSGVTVMQVFGAVNKATALQLRVYNGDLKSYKSNSVATDIYNKWLRVNVIHKVGKGEITVFINGQQKLVVNDDGPAEHYFKCGVYAAPDGSSNYMESRWKNIKLYKSDNKLEGCNNNHGTWLVQ</sequence>
<keyword id="KW-0903">Direct protein sequencing</keyword>
<keyword id="KW-0732">Signal</keyword>
<keyword id="KW-0926">Vacuole</keyword>
<proteinExistence type="evidence at protein level"/>
<dbReference type="EMBL" id="X89855">
    <property type="protein sequence ID" value="CAA61951.1"/>
    <property type="molecule type" value="mRNA"/>
</dbReference>
<dbReference type="PIR" id="T10760">
    <property type="entry name" value="T10760"/>
</dbReference>
<dbReference type="SMR" id="Q39962"/>
<dbReference type="Allergome" id="1528">
    <property type="allergen name" value="Hev b CitBP"/>
</dbReference>
<dbReference type="GO" id="GO:0005773">
    <property type="term" value="C:vacuole"/>
    <property type="evidence" value="ECO:0007669"/>
    <property type="project" value="UniProtKB-SubCell"/>
</dbReference>
<dbReference type="Gene3D" id="2.60.120.200">
    <property type="match status" value="1"/>
</dbReference>
<dbReference type="InterPro" id="IPR014895">
    <property type="entry name" value="Alginate_lyase_2"/>
</dbReference>
<dbReference type="InterPro" id="IPR013320">
    <property type="entry name" value="ConA-like_dom_sf"/>
</dbReference>
<dbReference type="PANTHER" id="PTHR33681:SF13">
    <property type="entry name" value="ALGINATE LYASE 2 DOMAIN-CONTAINING PROTEIN"/>
    <property type="match status" value="1"/>
</dbReference>
<dbReference type="PANTHER" id="PTHR33681">
    <property type="entry name" value="BINDING PROTEIN, PUTATIVE, EXPRESSED-RELATED"/>
    <property type="match status" value="1"/>
</dbReference>
<dbReference type="Pfam" id="PF08787">
    <property type="entry name" value="Alginate_lyase2"/>
    <property type="match status" value="1"/>
</dbReference>
<dbReference type="SUPFAM" id="SSF49899">
    <property type="entry name" value="Concanavalin A-like lectins/glucanases"/>
    <property type="match status" value="1"/>
</dbReference>
<organism evidence="5">
    <name type="scientific">Hevea brasiliensis</name>
    <name type="common">Para rubber tree</name>
    <name type="synonym">Siphonia brasiliensis</name>
    <dbReference type="NCBI Taxonomy" id="3981"/>
    <lineage>
        <taxon>Eukaryota</taxon>
        <taxon>Viridiplantae</taxon>
        <taxon>Streptophyta</taxon>
        <taxon>Embryophyta</taxon>
        <taxon>Tracheophyta</taxon>
        <taxon>Spermatophyta</taxon>
        <taxon>Magnoliopsida</taxon>
        <taxon>eudicotyledons</taxon>
        <taxon>Gunneridae</taxon>
        <taxon>Pentapetalae</taxon>
        <taxon>rosids</taxon>
        <taxon>fabids</taxon>
        <taxon>Malpighiales</taxon>
        <taxon>Euphorbiaceae</taxon>
        <taxon>Crotonoideae</taxon>
        <taxon>Micrandreae</taxon>
        <taxon>Hevea</taxon>
    </lineage>
</organism>
<protein>
    <recommendedName>
        <fullName>Citrate-binding protein</fullName>
    </recommendedName>
</protein>
<feature type="signal peptide" evidence="1 2">
    <location>
        <begin position="1"/>
        <end position="31"/>
    </location>
</feature>
<feature type="chain" id="PRO_0000020848" description="Citrate-binding protein">
    <location>
        <begin position="32"/>
        <end position="224"/>
    </location>
</feature>
<feature type="propeptide" id="PRO_0000020849" description="Removed in mature form">
    <location>
        <begin position="225"/>
        <end position="238"/>
    </location>
</feature>
<reference evidence="4" key="1">
    <citation type="journal article" date="1995" name="J. Biol. Chem.">
        <title>The tonoplast-associated citrate binding protein (CBP) of Hevea brasiliensis. Photoaffinity labeling, purification and cloning of the corresponding gene.</title>
        <authorList>
            <person name="Rentsch D."/>
            <person name="Goerlach J."/>
            <person name="Vogt E."/>
            <person name="Amrhein N."/>
            <person name="Martinoia E."/>
        </authorList>
    </citation>
    <scope>NUCLEOTIDE SEQUENCE [MRNA]</scope>
    <scope>PROTEIN SEQUENCE OF 32-50; 130-135; 137-142; 161-166 AND 182-192</scope>
    <scope>SUBCELLULAR LOCATION</scope>
    <source>
        <strain>cv. RRIM 600</strain>
        <tissue>Laticifer</tissue>
    </source>
</reference>
<reference evidence="4" key="2">
    <citation type="journal article" date="2001" name="Plant Physiol. Biochem.">
        <title>Enzymic and structural studies on processed proteins from the vacuolar (lutoid-body) fraction of latex of Hevea brasiliensis.</title>
        <authorList>
            <person name="Subroto T."/>
            <person name="de Vries H."/>
            <person name="Schuringa J.J."/>
            <person name="Soedjanaatmadja U.M.S."/>
            <person name="Hofsteenge J."/>
            <person name="Jekel P.A."/>
            <person name="Beintema J.J."/>
        </authorList>
    </citation>
    <scope>PROTEIN SEQUENCE OF 32-42; 49-60 AND 209-224</scope>
    <source>
        <strain>cv. PR 261</strain>
        <tissue>Latex</tissue>
    </source>
</reference>